<keyword id="KW-0210">Decarboxylase</keyword>
<keyword id="KW-0456">Lyase</keyword>
<keyword id="KW-0665">Pyrimidine biosynthesis</keyword>
<keyword id="KW-1185">Reference proteome</keyword>
<evidence type="ECO:0000255" key="1">
    <source>
        <dbReference type="HAMAP-Rule" id="MF_01200"/>
    </source>
</evidence>
<name>PYRF_ERYLH</name>
<comment type="function">
    <text evidence="1">Catalyzes the decarboxylation of orotidine 5'-monophosphate (OMP) to uridine 5'-monophosphate (UMP).</text>
</comment>
<comment type="catalytic activity">
    <reaction evidence="1">
        <text>orotidine 5'-phosphate + H(+) = UMP + CO2</text>
        <dbReference type="Rhea" id="RHEA:11596"/>
        <dbReference type="ChEBI" id="CHEBI:15378"/>
        <dbReference type="ChEBI" id="CHEBI:16526"/>
        <dbReference type="ChEBI" id="CHEBI:57538"/>
        <dbReference type="ChEBI" id="CHEBI:57865"/>
        <dbReference type="EC" id="4.1.1.23"/>
    </reaction>
</comment>
<comment type="pathway">
    <text evidence="1">Pyrimidine metabolism; UMP biosynthesis via de novo pathway; UMP from orotate: step 2/2.</text>
</comment>
<comment type="subunit">
    <text evidence="1">Homodimer.</text>
</comment>
<comment type="similarity">
    <text evidence="1">Belongs to the OMP decarboxylase family. Type 1 subfamily.</text>
</comment>
<sequence>MSNPVFLALDIPRLEAGKALVDKVKAHIGGVKLGMEFFYAHGHHGVHEIAHCGLPVFLDLKLHDIPNTVAAAMQSIHVLEPAIVTVHASGGRAMMEDAKAAAGENTKVVGVTMLTSLDERDLERTGVDGSPHDHVMRLAELAENAGLDGIVCSGQEVGAVHKQWKQGFFVVPGLRPAGSASGDQKRVVTPRQARDDGASVLVIGRPISKADDPEQAARDIEATL</sequence>
<dbReference type="EC" id="4.1.1.23" evidence="1"/>
<dbReference type="EMBL" id="CP000157">
    <property type="protein sequence ID" value="ABC63607.1"/>
    <property type="molecule type" value="Genomic_DNA"/>
</dbReference>
<dbReference type="RefSeq" id="WP_011414441.1">
    <property type="nucleotide sequence ID" value="NC_007722.1"/>
</dbReference>
<dbReference type="SMR" id="Q2N9N4"/>
<dbReference type="STRING" id="314225.ELI_07575"/>
<dbReference type="KEGG" id="eli:ELI_07575"/>
<dbReference type="eggNOG" id="COG0284">
    <property type="taxonomic scope" value="Bacteria"/>
</dbReference>
<dbReference type="HOGENOM" id="CLU_067069_1_0_5"/>
<dbReference type="OrthoDB" id="9806203at2"/>
<dbReference type="UniPathway" id="UPA00070">
    <property type="reaction ID" value="UER00120"/>
</dbReference>
<dbReference type="Proteomes" id="UP000008808">
    <property type="component" value="Chromosome"/>
</dbReference>
<dbReference type="GO" id="GO:0005829">
    <property type="term" value="C:cytosol"/>
    <property type="evidence" value="ECO:0007669"/>
    <property type="project" value="TreeGrafter"/>
</dbReference>
<dbReference type="GO" id="GO:0004590">
    <property type="term" value="F:orotidine-5'-phosphate decarboxylase activity"/>
    <property type="evidence" value="ECO:0007669"/>
    <property type="project" value="UniProtKB-UniRule"/>
</dbReference>
<dbReference type="GO" id="GO:0006207">
    <property type="term" value="P:'de novo' pyrimidine nucleobase biosynthetic process"/>
    <property type="evidence" value="ECO:0007669"/>
    <property type="project" value="InterPro"/>
</dbReference>
<dbReference type="GO" id="GO:0044205">
    <property type="term" value="P:'de novo' UMP biosynthetic process"/>
    <property type="evidence" value="ECO:0007669"/>
    <property type="project" value="UniProtKB-UniRule"/>
</dbReference>
<dbReference type="CDD" id="cd04725">
    <property type="entry name" value="OMP_decarboxylase_like"/>
    <property type="match status" value="1"/>
</dbReference>
<dbReference type="Gene3D" id="3.20.20.70">
    <property type="entry name" value="Aldolase class I"/>
    <property type="match status" value="1"/>
</dbReference>
<dbReference type="HAMAP" id="MF_01200_B">
    <property type="entry name" value="OMPdecase_type1_B"/>
    <property type="match status" value="1"/>
</dbReference>
<dbReference type="InterPro" id="IPR013785">
    <property type="entry name" value="Aldolase_TIM"/>
</dbReference>
<dbReference type="InterPro" id="IPR014732">
    <property type="entry name" value="OMPdecase"/>
</dbReference>
<dbReference type="InterPro" id="IPR018089">
    <property type="entry name" value="OMPdecase_AS"/>
</dbReference>
<dbReference type="InterPro" id="IPR047596">
    <property type="entry name" value="OMPdecase_bac"/>
</dbReference>
<dbReference type="InterPro" id="IPR001754">
    <property type="entry name" value="OMPdeCOase_dom"/>
</dbReference>
<dbReference type="InterPro" id="IPR011060">
    <property type="entry name" value="RibuloseP-bd_barrel"/>
</dbReference>
<dbReference type="NCBIfam" id="NF001273">
    <property type="entry name" value="PRK00230.1"/>
    <property type="match status" value="1"/>
</dbReference>
<dbReference type="NCBIfam" id="TIGR01740">
    <property type="entry name" value="pyrF"/>
    <property type="match status" value="1"/>
</dbReference>
<dbReference type="PANTHER" id="PTHR32119">
    <property type="entry name" value="OROTIDINE 5'-PHOSPHATE DECARBOXYLASE"/>
    <property type="match status" value="1"/>
</dbReference>
<dbReference type="PANTHER" id="PTHR32119:SF2">
    <property type="entry name" value="OROTIDINE 5'-PHOSPHATE DECARBOXYLASE"/>
    <property type="match status" value="1"/>
</dbReference>
<dbReference type="Pfam" id="PF00215">
    <property type="entry name" value="OMPdecase"/>
    <property type="match status" value="1"/>
</dbReference>
<dbReference type="SMART" id="SM00934">
    <property type="entry name" value="OMPdecase"/>
    <property type="match status" value="1"/>
</dbReference>
<dbReference type="SUPFAM" id="SSF51366">
    <property type="entry name" value="Ribulose-phoshate binding barrel"/>
    <property type="match status" value="1"/>
</dbReference>
<dbReference type="PROSITE" id="PS00156">
    <property type="entry name" value="OMPDECASE"/>
    <property type="match status" value="1"/>
</dbReference>
<organism>
    <name type="scientific">Erythrobacter litoralis (strain HTCC2594)</name>
    <dbReference type="NCBI Taxonomy" id="314225"/>
    <lineage>
        <taxon>Bacteria</taxon>
        <taxon>Pseudomonadati</taxon>
        <taxon>Pseudomonadota</taxon>
        <taxon>Alphaproteobacteria</taxon>
        <taxon>Sphingomonadales</taxon>
        <taxon>Erythrobacteraceae</taxon>
        <taxon>Erythrobacter/Porphyrobacter group</taxon>
        <taxon>Erythrobacter</taxon>
    </lineage>
</organism>
<proteinExistence type="inferred from homology"/>
<accession>Q2N9N4</accession>
<feature type="chain" id="PRO_1000065909" description="Orotidine 5'-phosphate decarboxylase">
    <location>
        <begin position="1"/>
        <end position="224"/>
    </location>
</feature>
<feature type="active site" description="Proton donor" evidence="1">
    <location>
        <position position="61"/>
    </location>
</feature>
<feature type="binding site" evidence="1">
    <location>
        <position position="10"/>
    </location>
    <ligand>
        <name>substrate</name>
    </ligand>
</feature>
<feature type="binding site" evidence="1">
    <location>
        <position position="32"/>
    </location>
    <ligand>
        <name>substrate</name>
    </ligand>
</feature>
<feature type="binding site" evidence="1">
    <location>
        <begin position="59"/>
        <end position="68"/>
    </location>
    <ligand>
        <name>substrate</name>
    </ligand>
</feature>
<feature type="binding site" evidence="1">
    <location>
        <position position="115"/>
    </location>
    <ligand>
        <name>substrate</name>
    </ligand>
</feature>
<feature type="binding site" evidence="1">
    <location>
        <position position="175"/>
    </location>
    <ligand>
        <name>substrate</name>
    </ligand>
</feature>
<feature type="binding site" evidence="1">
    <location>
        <position position="184"/>
    </location>
    <ligand>
        <name>substrate</name>
    </ligand>
</feature>
<feature type="binding site" evidence="1">
    <location>
        <position position="204"/>
    </location>
    <ligand>
        <name>substrate</name>
    </ligand>
</feature>
<feature type="binding site" evidence="1">
    <location>
        <position position="205"/>
    </location>
    <ligand>
        <name>substrate</name>
    </ligand>
</feature>
<reference key="1">
    <citation type="journal article" date="2009" name="J. Bacteriol.">
        <title>Complete genome sequence of Erythrobacter litoralis HTCC2594.</title>
        <authorList>
            <person name="Oh H.M."/>
            <person name="Giovannoni S.J."/>
            <person name="Ferriera S."/>
            <person name="Johnson J."/>
            <person name="Cho J.C."/>
        </authorList>
    </citation>
    <scope>NUCLEOTIDE SEQUENCE [LARGE SCALE GENOMIC DNA]</scope>
    <source>
        <strain>HTCC2594</strain>
    </source>
</reference>
<gene>
    <name evidence="1" type="primary">pyrF</name>
    <name type="ordered locus">ELI_07575</name>
</gene>
<protein>
    <recommendedName>
        <fullName evidence="1">Orotidine 5'-phosphate decarboxylase</fullName>
        <ecNumber evidence="1">4.1.1.23</ecNumber>
    </recommendedName>
    <alternativeName>
        <fullName evidence="1">OMP decarboxylase</fullName>
        <shortName evidence="1">OMPDCase</shortName>
        <shortName evidence="1">OMPdecase</shortName>
    </alternativeName>
</protein>